<evidence type="ECO:0000255" key="1">
    <source>
        <dbReference type="HAMAP-Rule" id="MF_00485"/>
    </source>
</evidence>
<evidence type="ECO:0000305" key="2"/>
<accession>A3MWZ7</accession>
<name>RS4E_PYRCJ</name>
<comment type="similarity">
    <text evidence="1">Belongs to the eukaryotic ribosomal protein eS4 family.</text>
</comment>
<gene>
    <name evidence="1" type="primary">rps4e</name>
    <name type="ordered locus">Pcal_1747</name>
</gene>
<dbReference type="EMBL" id="CP000561">
    <property type="protein sequence ID" value="ABO09164.1"/>
    <property type="molecule type" value="Genomic_DNA"/>
</dbReference>
<dbReference type="RefSeq" id="WP_011850423.1">
    <property type="nucleotide sequence ID" value="NC_009073.1"/>
</dbReference>
<dbReference type="PDB" id="9E71">
    <property type="method" value="EM"/>
    <property type="resolution" value="2.36 A"/>
    <property type="chains" value="BE=1-237"/>
</dbReference>
<dbReference type="PDB" id="9E7F">
    <property type="method" value="EM"/>
    <property type="resolution" value="2.53 A"/>
    <property type="chains" value="BE=1-237"/>
</dbReference>
<dbReference type="PDBsum" id="9E71"/>
<dbReference type="PDBsum" id="9E7F"/>
<dbReference type="EMDB" id="EMD-47628"/>
<dbReference type="EMDB" id="EMD-47668"/>
<dbReference type="SMR" id="A3MWZ7"/>
<dbReference type="STRING" id="410359.Pcal_1747"/>
<dbReference type="GeneID" id="4909362"/>
<dbReference type="KEGG" id="pcl:Pcal_1747"/>
<dbReference type="eggNOG" id="arCOG04093">
    <property type="taxonomic scope" value="Archaea"/>
</dbReference>
<dbReference type="HOGENOM" id="CLU_060400_0_0_2"/>
<dbReference type="OrthoDB" id="372073at2157"/>
<dbReference type="Proteomes" id="UP000001431">
    <property type="component" value="Chromosome"/>
</dbReference>
<dbReference type="GO" id="GO:0022627">
    <property type="term" value="C:cytosolic small ribosomal subunit"/>
    <property type="evidence" value="ECO:0007669"/>
    <property type="project" value="TreeGrafter"/>
</dbReference>
<dbReference type="GO" id="GO:0019843">
    <property type="term" value="F:rRNA binding"/>
    <property type="evidence" value="ECO:0007669"/>
    <property type="project" value="UniProtKB-KW"/>
</dbReference>
<dbReference type="GO" id="GO:0003735">
    <property type="term" value="F:structural constituent of ribosome"/>
    <property type="evidence" value="ECO:0007669"/>
    <property type="project" value="InterPro"/>
</dbReference>
<dbReference type="GO" id="GO:0006412">
    <property type="term" value="P:translation"/>
    <property type="evidence" value="ECO:0007669"/>
    <property type="project" value="UniProtKB-UniRule"/>
</dbReference>
<dbReference type="CDD" id="cd00165">
    <property type="entry name" value="S4"/>
    <property type="match status" value="1"/>
</dbReference>
<dbReference type="FunFam" id="3.10.290.10:FF:000002">
    <property type="entry name" value="40S ribosomal protein S4"/>
    <property type="match status" value="1"/>
</dbReference>
<dbReference type="Gene3D" id="2.30.30.30">
    <property type="match status" value="1"/>
</dbReference>
<dbReference type="Gene3D" id="2.40.50.740">
    <property type="match status" value="1"/>
</dbReference>
<dbReference type="Gene3D" id="3.10.290.10">
    <property type="entry name" value="RNA-binding S4 domain"/>
    <property type="match status" value="1"/>
</dbReference>
<dbReference type="HAMAP" id="MF_00485">
    <property type="entry name" value="Ribosomal_eS4"/>
    <property type="match status" value="1"/>
</dbReference>
<dbReference type="InterPro" id="IPR014722">
    <property type="entry name" value="Rib_uL2_dom2"/>
</dbReference>
<dbReference type="InterPro" id="IPR000876">
    <property type="entry name" value="Ribosomal_eS4"/>
</dbReference>
<dbReference type="InterPro" id="IPR013845">
    <property type="entry name" value="Ribosomal_eS4_central_region"/>
</dbReference>
<dbReference type="InterPro" id="IPR038237">
    <property type="entry name" value="Ribosomal_eS4_central_sf"/>
</dbReference>
<dbReference type="InterPro" id="IPR013843">
    <property type="entry name" value="Ribosomal_eS4_N"/>
</dbReference>
<dbReference type="InterPro" id="IPR002942">
    <property type="entry name" value="S4_RNA-bd"/>
</dbReference>
<dbReference type="InterPro" id="IPR036986">
    <property type="entry name" value="S4_RNA-bd_sf"/>
</dbReference>
<dbReference type="NCBIfam" id="NF003312">
    <property type="entry name" value="PRK04313.1"/>
    <property type="match status" value="1"/>
</dbReference>
<dbReference type="PANTHER" id="PTHR11581">
    <property type="entry name" value="30S/40S RIBOSOMAL PROTEIN S4"/>
    <property type="match status" value="1"/>
</dbReference>
<dbReference type="PANTHER" id="PTHR11581:SF0">
    <property type="entry name" value="SMALL RIBOSOMAL SUBUNIT PROTEIN ES4"/>
    <property type="match status" value="1"/>
</dbReference>
<dbReference type="Pfam" id="PF00900">
    <property type="entry name" value="Ribosomal_S4e"/>
    <property type="match status" value="1"/>
</dbReference>
<dbReference type="Pfam" id="PF08071">
    <property type="entry name" value="RS4NT"/>
    <property type="match status" value="1"/>
</dbReference>
<dbReference type="Pfam" id="PF01479">
    <property type="entry name" value="S4"/>
    <property type="match status" value="1"/>
</dbReference>
<dbReference type="PIRSF" id="PIRSF002116">
    <property type="entry name" value="Ribosomal_S4"/>
    <property type="match status" value="1"/>
</dbReference>
<dbReference type="SMART" id="SM00363">
    <property type="entry name" value="S4"/>
    <property type="match status" value="1"/>
</dbReference>
<dbReference type="SUPFAM" id="SSF55174">
    <property type="entry name" value="Alpha-L RNA-binding motif"/>
    <property type="match status" value="1"/>
</dbReference>
<dbReference type="PROSITE" id="PS50889">
    <property type="entry name" value="S4"/>
    <property type="match status" value="1"/>
</dbReference>
<sequence>MVHLRKSLAPYWWPIPRKAGGVWAVRPSTGPHSLEYSLPLAVVVRDVLRYAKTLREARYIISRGYIKVDGVVRKDYKFPIGLMDVVEIVPTGEIYRVVPDEAKYYDLKPIPSSEAALKPLRVEGKTAVSGGRIQLHFHDGRNLILPPDVGRQIKTFDTVVYDLENKAIKTHLPLRLGQLAVVTHGGNIGFVGQFFEVVWTLKRRQSVVALRKGEEVRRTILDYIMVIGTEAPVVKIS</sequence>
<protein>
    <recommendedName>
        <fullName evidence="1">Small ribosomal subunit protein eS4</fullName>
    </recommendedName>
    <alternativeName>
        <fullName evidence="2">30S ribosomal protein S4e</fullName>
    </alternativeName>
</protein>
<reference key="1">
    <citation type="submission" date="2007-02" db="EMBL/GenBank/DDBJ databases">
        <title>Complete sequence of Pyrobaculum calidifontis JCM 11548.</title>
        <authorList>
            <consortium name="US DOE Joint Genome Institute"/>
            <person name="Copeland A."/>
            <person name="Lucas S."/>
            <person name="Lapidus A."/>
            <person name="Barry K."/>
            <person name="Glavina del Rio T."/>
            <person name="Dalin E."/>
            <person name="Tice H."/>
            <person name="Pitluck S."/>
            <person name="Chain P."/>
            <person name="Malfatti S."/>
            <person name="Shin M."/>
            <person name="Vergez L."/>
            <person name="Schmutz J."/>
            <person name="Larimer F."/>
            <person name="Land M."/>
            <person name="Hauser L."/>
            <person name="Kyrpides N."/>
            <person name="Mikhailova N."/>
            <person name="Cozen A.E."/>
            <person name="Fitz-Gibbon S.T."/>
            <person name="House C.H."/>
            <person name="Saltikov C."/>
            <person name="Lowe T.M."/>
            <person name="Richardson P."/>
        </authorList>
    </citation>
    <scope>NUCLEOTIDE SEQUENCE [LARGE SCALE GENOMIC DNA]</scope>
    <source>
        <strain>DSM 21063 / JCM 11548 / VA1</strain>
    </source>
</reference>
<keyword id="KW-0002">3D-structure</keyword>
<keyword id="KW-0687">Ribonucleoprotein</keyword>
<keyword id="KW-0689">Ribosomal protein</keyword>
<keyword id="KW-0694">RNA-binding</keyword>
<keyword id="KW-0699">rRNA-binding</keyword>
<proteinExistence type="evidence at protein level"/>
<feature type="chain" id="PRO_1000081347" description="Small ribosomal subunit protein eS4">
    <location>
        <begin position="1"/>
        <end position="237"/>
    </location>
</feature>
<feature type="domain" description="S4 RNA-binding" evidence="1">
    <location>
        <begin position="38"/>
        <end position="110"/>
    </location>
</feature>
<organism>
    <name type="scientific">Pyrobaculum calidifontis (strain DSM 21063 / JCM 11548 / VA1)</name>
    <dbReference type="NCBI Taxonomy" id="410359"/>
    <lineage>
        <taxon>Archaea</taxon>
        <taxon>Thermoproteota</taxon>
        <taxon>Thermoprotei</taxon>
        <taxon>Thermoproteales</taxon>
        <taxon>Thermoproteaceae</taxon>
        <taxon>Pyrobaculum</taxon>
    </lineage>
</organism>